<proteinExistence type="inferred from homology"/>
<feature type="chain" id="PRO_1000119418" description="Small ribosomal subunit protein uS2">
    <location>
        <begin position="1"/>
        <end position="233"/>
    </location>
</feature>
<accession>B7HLG0</accession>
<reference key="1">
    <citation type="submission" date="2008-10" db="EMBL/GenBank/DDBJ databases">
        <title>Genome sequence of Bacillus cereus AH187.</title>
        <authorList>
            <person name="Dodson R.J."/>
            <person name="Durkin A.S."/>
            <person name="Rosovitz M.J."/>
            <person name="Rasko D.A."/>
            <person name="Kolsto A.B."/>
            <person name="Okstad O.A."/>
            <person name="Ravel J."/>
            <person name="Sutton G."/>
        </authorList>
    </citation>
    <scope>NUCLEOTIDE SEQUENCE [LARGE SCALE GENOMIC DNA]</scope>
    <source>
        <strain>AH187</strain>
    </source>
</reference>
<comment type="similarity">
    <text evidence="1">Belongs to the universal ribosomal protein uS2 family.</text>
</comment>
<name>RS2_BACC7</name>
<gene>
    <name evidence="1" type="primary">rpsB</name>
    <name type="ordered locus">BCAH187_A3874</name>
</gene>
<dbReference type="EMBL" id="CP001177">
    <property type="protein sequence ID" value="ACJ77231.1"/>
    <property type="molecule type" value="Genomic_DNA"/>
</dbReference>
<dbReference type="SMR" id="B7HLG0"/>
<dbReference type="KEGG" id="bcr:BCAH187_A3874"/>
<dbReference type="HOGENOM" id="CLU_040318_1_2_9"/>
<dbReference type="Proteomes" id="UP000002214">
    <property type="component" value="Chromosome"/>
</dbReference>
<dbReference type="GO" id="GO:0022627">
    <property type="term" value="C:cytosolic small ribosomal subunit"/>
    <property type="evidence" value="ECO:0007669"/>
    <property type="project" value="TreeGrafter"/>
</dbReference>
<dbReference type="GO" id="GO:0003735">
    <property type="term" value="F:structural constituent of ribosome"/>
    <property type="evidence" value="ECO:0007669"/>
    <property type="project" value="InterPro"/>
</dbReference>
<dbReference type="GO" id="GO:0006412">
    <property type="term" value="P:translation"/>
    <property type="evidence" value="ECO:0007669"/>
    <property type="project" value="UniProtKB-UniRule"/>
</dbReference>
<dbReference type="CDD" id="cd01425">
    <property type="entry name" value="RPS2"/>
    <property type="match status" value="1"/>
</dbReference>
<dbReference type="FunFam" id="1.10.287.610:FF:000001">
    <property type="entry name" value="30S ribosomal protein S2"/>
    <property type="match status" value="1"/>
</dbReference>
<dbReference type="Gene3D" id="3.40.50.10490">
    <property type="entry name" value="Glucose-6-phosphate isomerase like protein, domain 1"/>
    <property type="match status" value="1"/>
</dbReference>
<dbReference type="Gene3D" id="1.10.287.610">
    <property type="entry name" value="Helix hairpin bin"/>
    <property type="match status" value="1"/>
</dbReference>
<dbReference type="HAMAP" id="MF_00291_B">
    <property type="entry name" value="Ribosomal_uS2_B"/>
    <property type="match status" value="1"/>
</dbReference>
<dbReference type="InterPro" id="IPR001865">
    <property type="entry name" value="Ribosomal_uS2"/>
</dbReference>
<dbReference type="InterPro" id="IPR005706">
    <property type="entry name" value="Ribosomal_uS2_bac/mit/plastid"/>
</dbReference>
<dbReference type="InterPro" id="IPR018130">
    <property type="entry name" value="Ribosomal_uS2_CS"/>
</dbReference>
<dbReference type="InterPro" id="IPR023591">
    <property type="entry name" value="Ribosomal_uS2_flav_dom_sf"/>
</dbReference>
<dbReference type="NCBIfam" id="TIGR01011">
    <property type="entry name" value="rpsB_bact"/>
    <property type="match status" value="1"/>
</dbReference>
<dbReference type="PANTHER" id="PTHR12534">
    <property type="entry name" value="30S RIBOSOMAL PROTEIN S2 PROKARYOTIC AND ORGANELLAR"/>
    <property type="match status" value="1"/>
</dbReference>
<dbReference type="PANTHER" id="PTHR12534:SF0">
    <property type="entry name" value="SMALL RIBOSOMAL SUBUNIT PROTEIN US2M"/>
    <property type="match status" value="1"/>
</dbReference>
<dbReference type="Pfam" id="PF00318">
    <property type="entry name" value="Ribosomal_S2"/>
    <property type="match status" value="1"/>
</dbReference>
<dbReference type="PRINTS" id="PR00395">
    <property type="entry name" value="RIBOSOMALS2"/>
</dbReference>
<dbReference type="SUPFAM" id="SSF52313">
    <property type="entry name" value="Ribosomal protein S2"/>
    <property type="match status" value="1"/>
</dbReference>
<dbReference type="PROSITE" id="PS00962">
    <property type="entry name" value="RIBOSOMAL_S2_1"/>
    <property type="match status" value="1"/>
</dbReference>
<dbReference type="PROSITE" id="PS00963">
    <property type="entry name" value="RIBOSOMAL_S2_2"/>
    <property type="match status" value="1"/>
</dbReference>
<sequence length="233" mass="26517">MSVISMKQLLEAGVHFGHQTRRWNPKMKRYIFTERNGIYIIDLQKTVKKVEEAFKVMRDIAAEGGDILFVGTKKQAQEAIKEEATRAGMYFVNQRWLGGTLTNFQTIQKRIKRLKDIERMQEDGTFEVLPKKEVVQLKKELERLEKFLGGIKDMKGLPSALFVVDPRKERIAVAEARKLHIPIIGIVDTNCDPDEIDHVIPANDDAIRAVKLLTSKMADAILEAKQGEETVTA</sequence>
<keyword id="KW-0687">Ribonucleoprotein</keyword>
<keyword id="KW-0689">Ribosomal protein</keyword>
<evidence type="ECO:0000255" key="1">
    <source>
        <dbReference type="HAMAP-Rule" id="MF_00291"/>
    </source>
</evidence>
<evidence type="ECO:0000305" key="2"/>
<protein>
    <recommendedName>
        <fullName evidence="1">Small ribosomal subunit protein uS2</fullName>
    </recommendedName>
    <alternativeName>
        <fullName evidence="2">30S ribosomal protein S2</fullName>
    </alternativeName>
</protein>
<organism>
    <name type="scientific">Bacillus cereus (strain AH187)</name>
    <dbReference type="NCBI Taxonomy" id="405534"/>
    <lineage>
        <taxon>Bacteria</taxon>
        <taxon>Bacillati</taxon>
        <taxon>Bacillota</taxon>
        <taxon>Bacilli</taxon>
        <taxon>Bacillales</taxon>
        <taxon>Bacillaceae</taxon>
        <taxon>Bacillus</taxon>
        <taxon>Bacillus cereus group</taxon>
    </lineage>
</organism>